<organism>
    <name type="scientific">Schizosaccharomyces pombe (strain 972 / ATCC 24843)</name>
    <name type="common">Fission yeast</name>
    <dbReference type="NCBI Taxonomy" id="284812"/>
    <lineage>
        <taxon>Eukaryota</taxon>
        <taxon>Fungi</taxon>
        <taxon>Dikarya</taxon>
        <taxon>Ascomycota</taxon>
        <taxon>Taphrinomycotina</taxon>
        <taxon>Schizosaccharomycetes</taxon>
        <taxon>Schizosaccharomycetales</taxon>
        <taxon>Schizosaccharomycetaceae</taxon>
        <taxon>Schizosaccharomyces</taxon>
    </lineage>
</organism>
<comment type="function">
    <text evidence="4 6">RNA exonuclease that acts as a negative regulator of RNA interference (RNAi). Acts by degrading the 3'-overhangs of double-stranded short interfering RNAs (siRNAs). Represses the accumulation of heterochromatic siRNAs leading to negative regulation of the RNAi-mediated heterochromoatin assembly. Also involved in rRNA biogenesis, trimming the 5.8S ribosomal RNA (rRNA) from a slightly longer pre-5.8S RNA in the cytoplasm.</text>
</comment>
<comment type="cofactor">
    <cofactor evidence="1">
        <name>Mg(2+)</name>
        <dbReference type="ChEBI" id="CHEBI:18420"/>
    </cofactor>
    <text evidence="1">Binds 2 magnesium ions per subunit.</text>
</comment>
<comment type="subcellular location">
    <subcellularLocation>
        <location evidence="4 5">Cytoplasm</location>
    </subcellularLocation>
</comment>
<comment type="sequence caution" evidence="7">
    <conflict type="erroneous gene model prediction">
        <sequence resource="EMBL-CDS" id="BAA21459"/>
    </conflict>
</comment>
<reference key="1">
    <citation type="journal article" date="2000" name="Yeast">
        <title>A 38 kb segment containing the cdc2 gene from the left arm of fission yeast chromosome II: sequence analysis and characterization of the genomic DNA and cDNAs encoded on the segment.</title>
        <authorList>
            <person name="Machida M."/>
            <person name="Yamazaki S."/>
            <person name="Kunihiro S."/>
            <person name="Tanaka T."/>
            <person name="Kushida N."/>
            <person name="Jinno K."/>
            <person name="Haikawa Y."/>
            <person name="Yamazaki J."/>
            <person name="Yamamoto S."/>
            <person name="Sekine M."/>
            <person name="Oguchi A."/>
            <person name="Nagai Y."/>
            <person name="Sakai M."/>
            <person name="Aoki K."/>
            <person name="Ogura K."/>
            <person name="Kudoh Y."/>
            <person name="Kikuchi H."/>
            <person name="Zhang M.Q."/>
            <person name="Yanagida M."/>
        </authorList>
    </citation>
    <scope>NUCLEOTIDE SEQUENCE [LARGE SCALE GENOMIC DNA]</scope>
    <source>
        <strain>972 / ATCC 24843</strain>
    </source>
</reference>
<reference key="2">
    <citation type="journal article" date="2002" name="Nature">
        <title>The genome sequence of Schizosaccharomyces pombe.</title>
        <authorList>
            <person name="Wood V."/>
            <person name="Gwilliam R."/>
            <person name="Rajandream M.A."/>
            <person name="Lyne M.H."/>
            <person name="Lyne R."/>
            <person name="Stewart A."/>
            <person name="Sgouros J.G."/>
            <person name="Peat N."/>
            <person name="Hayles J."/>
            <person name="Baker S.G."/>
            <person name="Basham D."/>
            <person name="Bowman S."/>
            <person name="Brooks K."/>
            <person name="Brown D."/>
            <person name="Brown S."/>
            <person name="Chillingworth T."/>
            <person name="Churcher C.M."/>
            <person name="Collins M."/>
            <person name="Connor R."/>
            <person name="Cronin A."/>
            <person name="Davis P."/>
            <person name="Feltwell T."/>
            <person name="Fraser A."/>
            <person name="Gentles S."/>
            <person name="Goble A."/>
            <person name="Hamlin N."/>
            <person name="Harris D.E."/>
            <person name="Hidalgo J."/>
            <person name="Hodgson G."/>
            <person name="Holroyd S."/>
            <person name="Hornsby T."/>
            <person name="Howarth S."/>
            <person name="Huckle E.J."/>
            <person name="Hunt S."/>
            <person name="Jagels K."/>
            <person name="James K.D."/>
            <person name="Jones L."/>
            <person name="Jones M."/>
            <person name="Leather S."/>
            <person name="McDonald S."/>
            <person name="McLean J."/>
            <person name="Mooney P."/>
            <person name="Moule S."/>
            <person name="Mungall K.L."/>
            <person name="Murphy L.D."/>
            <person name="Niblett D."/>
            <person name="Odell C."/>
            <person name="Oliver K."/>
            <person name="O'Neil S."/>
            <person name="Pearson D."/>
            <person name="Quail M.A."/>
            <person name="Rabbinowitsch E."/>
            <person name="Rutherford K.M."/>
            <person name="Rutter S."/>
            <person name="Saunders D."/>
            <person name="Seeger K."/>
            <person name="Sharp S."/>
            <person name="Skelton J."/>
            <person name="Simmonds M.N."/>
            <person name="Squares R."/>
            <person name="Squares S."/>
            <person name="Stevens K."/>
            <person name="Taylor K."/>
            <person name="Taylor R.G."/>
            <person name="Tivey A."/>
            <person name="Walsh S.V."/>
            <person name="Warren T."/>
            <person name="Whitehead S."/>
            <person name="Woodward J.R."/>
            <person name="Volckaert G."/>
            <person name="Aert R."/>
            <person name="Robben J."/>
            <person name="Grymonprez B."/>
            <person name="Weltjens I."/>
            <person name="Vanstreels E."/>
            <person name="Rieger M."/>
            <person name="Schaefer M."/>
            <person name="Mueller-Auer S."/>
            <person name="Gabel C."/>
            <person name="Fuchs M."/>
            <person name="Duesterhoeft A."/>
            <person name="Fritzc C."/>
            <person name="Holzer E."/>
            <person name="Moestl D."/>
            <person name="Hilbert H."/>
            <person name="Borzym K."/>
            <person name="Langer I."/>
            <person name="Beck A."/>
            <person name="Lehrach H."/>
            <person name="Reinhardt R."/>
            <person name="Pohl T.M."/>
            <person name="Eger P."/>
            <person name="Zimmermann W."/>
            <person name="Wedler H."/>
            <person name="Wambutt R."/>
            <person name="Purnelle B."/>
            <person name="Goffeau A."/>
            <person name="Cadieu E."/>
            <person name="Dreano S."/>
            <person name="Gloux S."/>
            <person name="Lelaure V."/>
            <person name="Mottier S."/>
            <person name="Galibert F."/>
            <person name="Aves S.J."/>
            <person name="Xiang Z."/>
            <person name="Hunt C."/>
            <person name="Moore K."/>
            <person name="Hurst S.M."/>
            <person name="Lucas M."/>
            <person name="Rochet M."/>
            <person name="Gaillardin C."/>
            <person name="Tallada V.A."/>
            <person name="Garzon A."/>
            <person name="Thode G."/>
            <person name="Daga R.R."/>
            <person name="Cruzado L."/>
            <person name="Jimenez J."/>
            <person name="Sanchez M."/>
            <person name="del Rey F."/>
            <person name="Benito J."/>
            <person name="Dominguez A."/>
            <person name="Revuelta J.L."/>
            <person name="Moreno S."/>
            <person name="Armstrong J."/>
            <person name="Forsburg S.L."/>
            <person name="Cerutti L."/>
            <person name="Lowe T."/>
            <person name="McCombie W.R."/>
            <person name="Paulsen I."/>
            <person name="Potashkin J."/>
            <person name="Shpakovski G.V."/>
            <person name="Ussery D."/>
            <person name="Barrell B.G."/>
            <person name="Nurse P."/>
        </authorList>
    </citation>
    <scope>NUCLEOTIDE SEQUENCE [LARGE SCALE GENOMIC DNA]</scope>
    <source>
        <strain>972 / ATCC 24843</strain>
    </source>
</reference>
<reference key="3">
    <citation type="journal article" date="2006" name="Curr. Biol.">
        <title>Conserved ribonuclease, Eri1, negatively regulates heterochromatin assembly in fission yeast.</title>
        <authorList>
            <person name="Iida T."/>
            <person name="Kawaguchi R."/>
            <person name="Nakayama J."/>
        </authorList>
    </citation>
    <scope>FUNCTION</scope>
    <scope>SUBCELLULAR LOCATION</scope>
    <scope>MUTAGENESIS OF HIS-248 AND ASP-252</scope>
</reference>
<reference key="4">
    <citation type="journal article" date="2006" name="Nat. Biotechnol.">
        <title>ORFeome cloning and global analysis of protein localization in the fission yeast Schizosaccharomyces pombe.</title>
        <authorList>
            <person name="Matsuyama A."/>
            <person name="Arai R."/>
            <person name="Yashiroda Y."/>
            <person name="Shirai A."/>
            <person name="Kamata A."/>
            <person name="Sekido S."/>
            <person name="Kobayashi Y."/>
            <person name="Hashimoto A."/>
            <person name="Hamamoto M."/>
            <person name="Hiraoka Y."/>
            <person name="Horinouchi S."/>
            <person name="Yoshida M."/>
        </authorList>
    </citation>
    <scope>SUBCELLULAR LOCATION [LARGE SCALE ANALYSIS]</scope>
</reference>
<reference key="5">
    <citation type="journal article" date="2008" name="Nat. Struct. Mol. Biol.">
        <title>The exonuclease ERI-1 has a conserved dual role in 5.8S rRNA processing and RNAi.</title>
        <authorList>
            <person name="Gabel H.W."/>
            <person name="Ruvkun G."/>
        </authorList>
    </citation>
    <scope>FUNCTION</scope>
</reference>
<proteinExistence type="evidence at protein level"/>
<name>ERI1_SCHPO</name>
<feature type="chain" id="PRO_0000362146" description="3'-5' exonuclease eri1">
    <location>
        <begin position="1"/>
        <end position="297"/>
    </location>
</feature>
<feature type="domain" description="SAP" evidence="3">
    <location>
        <begin position="4"/>
        <end position="38"/>
    </location>
</feature>
<feature type="domain" description="Exonuclease" evidence="2">
    <location>
        <begin position="68"/>
        <end position="153"/>
    </location>
</feature>
<feature type="active site" description="Proton acceptor" evidence="2">
    <location>
        <position position="72"/>
    </location>
</feature>
<feature type="active site" description="Proton acceptor" evidence="2">
    <location>
        <position position="248"/>
    </location>
</feature>
<feature type="binding site" evidence="1">
    <location>
        <position position="70"/>
    </location>
    <ligand>
        <name>Mg(2+)</name>
        <dbReference type="ChEBI" id="CHEBI:18420"/>
        <label>1</label>
    </ligand>
</feature>
<feature type="binding site" evidence="1">
    <location>
        <position position="70"/>
    </location>
    <ligand>
        <name>Mg(2+)</name>
        <dbReference type="ChEBI" id="CHEBI:18420"/>
        <label>2</label>
    </ligand>
</feature>
<feature type="binding site" evidence="1">
    <location>
        <position position="72"/>
    </location>
    <ligand>
        <name>AMP</name>
        <dbReference type="ChEBI" id="CHEBI:456215"/>
    </ligand>
</feature>
<feature type="binding site" evidence="1">
    <location>
        <position position="72"/>
    </location>
    <ligand>
        <name>Mg(2+)</name>
        <dbReference type="ChEBI" id="CHEBI:18420"/>
        <label>1</label>
    </ligand>
</feature>
<feature type="binding site" evidence="1">
    <location>
        <position position="73"/>
    </location>
    <ligand>
        <name>AMP</name>
        <dbReference type="ChEBI" id="CHEBI:456215"/>
    </ligand>
</feature>
<feature type="binding site" evidence="1">
    <location>
        <position position="190"/>
    </location>
    <ligand>
        <name>Mg(2+)</name>
        <dbReference type="ChEBI" id="CHEBI:18420"/>
        <label>2</label>
    </ligand>
</feature>
<feature type="binding site" evidence="1">
    <location>
        <position position="248"/>
    </location>
    <ligand>
        <name>AMP</name>
        <dbReference type="ChEBI" id="CHEBI:456215"/>
    </ligand>
</feature>
<feature type="binding site" evidence="1">
    <location>
        <position position="253"/>
    </location>
    <ligand>
        <name>Mg(2+)</name>
        <dbReference type="ChEBI" id="CHEBI:18420"/>
        <label>1</label>
    </ligand>
</feature>
<feature type="mutagenesis site" description="Disrupts exonuclease activity." evidence="4">
    <original>H</original>
    <variation>A</variation>
    <location>
        <position position="248"/>
    </location>
</feature>
<feature type="mutagenesis site" description="Disrupts exonuclease activity." evidence="4">
    <original>D</original>
    <variation>A</variation>
    <location>
        <position position="252"/>
    </location>
</feature>
<evidence type="ECO:0000250" key="1"/>
<evidence type="ECO:0000255" key="2"/>
<evidence type="ECO:0000255" key="3">
    <source>
        <dbReference type="PROSITE-ProRule" id="PRU00186"/>
    </source>
</evidence>
<evidence type="ECO:0000269" key="4">
    <source>
    </source>
</evidence>
<evidence type="ECO:0000269" key="5">
    <source>
    </source>
</evidence>
<evidence type="ECO:0000269" key="6">
    <source>
    </source>
</evidence>
<evidence type="ECO:0000305" key="7"/>
<evidence type="ECO:0000312" key="8">
    <source>
        <dbReference type="PomBase" id="SPBC30B4.08"/>
    </source>
</evidence>
<keyword id="KW-0963">Cytoplasm</keyword>
<keyword id="KW-0269">Exonuclease</keyword>
<keyword id="KW-0378">Hydrolase</keyword>
<keyword id="KW-0460">Magnesium</keyword>
<keyword id="KW-0479">Metal-binding</keyword>
<keyword id="KW-0540">Nuclease</keyword>
<keyword id="KW-1185">Reference proteome</keyword>
<keyword id="KW-0694">RNA-binding</keyword>
<keyword id="KW-0943">RNA-mediated gene silencing</keyword>
<protein>
    <recommendedName>
        <fullName>3'-5' exonuclease eri1</fullName>
        <ecNumber>3.1.-.-</ecNumber>
    </recommendedName>
    <alternativeName>
        <fullName>Enhanced RNAi protein</fullName>
    </alternativeName>
</protein>
<sequence>MNQKTPSTVEEIRIALQELGLSTNGNKEKLKRRWKFREKRLEEKRKQERYQKFSTSNENKTCLRYLLIVDVEATCEEGCGFSFENEIIELPCLLFDLIEKSIIDEFHSYVRPSMNPTLSDYCKSLTGIQQCTVDKAPIFSDVLEELFIFLRKHSNILVPSVDEIEIIEPLKSVPRTQPKNWAWACDGPWDMASFLAKQFKYDKMPIPDWIKGPFVDIRSFYKDVYRVPRTNINGMLEHWGLQFEGSEHRGIDDARNLSRIVKKMCSENVEFECNRWWMEYEKNGWIPNRSYPPYFAS</sequence>
<gene>
    <name type="primary">eri1</name>
    <name type="ORF">pi077</name>
    <name evidence="8" type="ORF">SPBC30B4.08</name>
</gene>
<accession>Q08I43</accession>
<accession>A0AAN2L411</accession>
<accession>O13668</accession>
<dbReference type="EC" id="3.1.-.-"/>
<dbReference type="EMBL" id="AB004539">
    <property type="protein sequence ID" value="BAA21459.1"/>
    <property type="status" value="ALT_SEQ"/>
    <property type="molecule type" value="Genomic_DNA"/>
</dbReference>
<dbReference type="EMBL" id="CU329671">
    <property type="protein sequence ID" value="CAK9839839.1"/>
    <property type="molecule type" value="Genomic_DNA"/>
</dbReference>
<dbReference type="RefSeq" id="XP_001713129.1">
    <property type="nucleotide sequence ID" value="XM_001713077.2"/>
</dbReference>
<dbReference type="SMR" id="Q08I43"/>
<dbReference type="BioGRID" id="276876">
    <property type="interactions" value="40"/>
</dbReference>
<dbReference type="FunCoup" id="Q08I43">
    <property type="interactions" value="286"/>
</dbReference>
<dbReference type="STRING" id="284812.Q08I43"/>
<dbReference type="PaxDb" id="4896-SPBC30B4.08.1"/>
<dbReference type="EnsemblFungi" id="SPBC30B4.08.1">
    <property type="protein sequence ID" value="SPBC30B4.08.1:pep"/>
    <property type="gene ID" value="SPBC30B4.08"/>
</dbReference>
<dbReference type="PomBase" id="SPBC30B4.08">
    <property type="gene designation" value="eri1"/>
</dbReference>
<dbReference type="VEuPathDB" id="FungiDB:SPBC30B4.08"/>
<dbReference type="eggNOG" id="KOG0542">
    <property type="taxonomic scope" value="Eukaryota"/>
</dbReference>
<dbReference type="HOGENOM" id="CLU_037266_4_1_1"/>
<dbReference type="InParanoid" id="Q08I43"/>
<dbReference type="OMA" id="MHSGQLM"/>
<dbReference type="PhylomeDB" id="Q08I43"/>
<dbReference type="PRO" id="PR:Q08I43"/>
<dbReference type="Proteomes" id="UP000002485">
    <property type="component" value="Chromosome II"/>
</dbReference>
<dbReference type="GO" id="GO:0005737">
    <property type="term" value="C:cytoplasm"/>
    <property type="evidence" value="ECO:0000314"/>
    <property type="project" value="PomBase"/>
</dbReference>
<dbReference type="GO" id="GO:0005829">
    <property type="term" value="C:cytosol"/>
    <property type="evidence" value="ECO:0007005"/>
    <property type="project" value="PomBase"/>
</dbReference>
<dbReference type="GO" id="GO:0005634">
    <property type="term" value="C:nucleus"/>
    <property type="evidence" value="ECO:0000250"/>
    <property type="project" value="PomBase"/>
</dbReference>
<dbReference type="GO" id="GO:0000175">
    <property type="term" value="F:3'-5'-RNA exonuclease activity"/>
    <property type="evidence" value="ECO:0000315"/>
    <property type="project" value="PomBase"/>
</dbReference>
<dbReference type="GO" id="GO:0003725">
    <property type="term" value="F:double-stranded RNA binding"/>
    <property type="evidence" value="ECO:0000314"/>
    <property type="project" value="PomBase"/>
</dbReference>
<dbReference type="GO" id="GO:0032296">
    <property type="term" value="F:double-stranded RNA-specific ribonuclease activity"/>
    <property type="evidence" value="ECO:0000314"/>
    <property type="project" value="PomBase"/>
</dbReference>
<dbReference type="GO" id="GO:0046872">
    <property type="term" value="F:metal ion binding"/>
    <property type="evidence" value="ECO:0007669"/>
    <property type="project" value="UniProtKB-KW"/>
</dbReference>
<dbReference type="GO" id="GO:0000467">
    <property type="term" value="P:exonucleolytic trimming to generate mature 3'-end of 5.8S rRNA from tricistronic rRNA transcript (SSU-rRNA, 5.8S rRNA, LSU-rRNA)"/>
    <property type="evidence" value="ECO:0000315"/>
    <property type="project" value="PomBase"/>
</dbReference>
<dbReference type="GO" id="GO:0060906">
    <property type="term" value="P:negative regulation of regulatory ncRNA-mediated heterochromatin formation"/>
    <property type="evidence" value="ECO:0000315"/>
    <property type="project" value="PomBase"/>
</dbReference>
<dbReference type="GO" id="GO:0031047">
    <property type="term" value="P:regulatory ncRNA-mediated gene silencing"/>
    <property type="evidence" value="ECO:0007669"/>
    <property type="project" value="UniProtKB-KW"/>
</dbReference>
<dbReference type="CDD" id="cd06133">
    <property type="entry name" value="ERI-1_3'hExo_like"/>
    <property type="match status" value="1"/>
</dbReference>
<dbReference type="Gene3D" id="3.30.420.10">
    <property type="entry name" value="Ribonuclease H-like superfamily/Ribonuclease H"/>
    <property type="match status" value="1"/>
</dbReference>
<dbReference type="InterPro" id="IPR051274">
    <property type="entry name" value="3-5_Exoribonuclease"/>
</dbReference>
<dbReference type="InterPro" id="IPR047201">
    <property type="entry name" value="ERI-1_3'hExo-like"/>
</dbReference>
<dbReference type="InterPro" id="IPR013520">
    <property type="entry name" value="Exonuclease_RNaseT/DNA_pol3"/>
</dbReference>
<dbReference type="InterPro" id="IPR012337">
    <property type="entry name" value="RNaseH-like_sf"/>
</dbReference>
<dbReference type="InterPro" id="IPR036397">
    <property type="entry name" value="RNaseH_sf"/>
</dbReference>
<dbReference type="InterPro" id="IPR003034">
    <property type="entry name" value="SAP_dom"/>
</dbReference>
<dbReference type="PANTHER" id="PTHR23044">
    <property type="entry name" value="3'-5' EXONUCLEASE ERI1-RELATED"/>
    <property type="match status" value="1"/>
</dbReference>
<dbReference type="PANTHER" id="PTHR23044:SF61">
    <property type="entry name" value="3'-5' EXORIBONUCLEASE 1-RELATED"/>
    <property type="match status" value="1"/>
</dbReference>
<dbReference type="Pfam" id="PF00929">
    <property type="entry name" value="RNase_T"/>
    <property type="match status" value="1"/>
</dbReference>
<dbReference type="SMART" id="SM00479">
    <property type="entry name" value="EXOIII"/>
    <property type="match status" value="1"/>
</dbReference>
<dbReference type="SUPFAM" id="SSF53098">
    <property type="entry name" value="Ribonuclease H-like"/>
    <property type="match status" value="1"/>
</dbReference>
<dbReference type="PROSITE" id="PS50800">
    <property type="entry name" value="SAP"/>
    <property type="match status" value="1"/>
</dbReference>